<proteinExistence type="inferred from homology"/>
<dbReference type="EC" id="2.7.11.1" evidence="1"/>
<dbReference type="EMBL" id="EF107734">
    <property type="protein sequence ID" value="ABO31072.1"/>
    <property type="molecule type" value="Genomic_DNA"/>
</dbReference>
<dbReference type="EMBL" id="AM920433">
    <property type="protein sequence ID" value="CAP94573.1"/>
    <property type="molecule type" value="Genomic_DNA"/>
</dbReference>
<dbReference type="RefSeq" id="XP_002562187.1">
    <property type="nucleotide sequence ID" value="XM_002562141.1"/>
</dbReference>
<dbReference type="SMR" id="A7KAL2"/>
<dbReference type="STRING" id="500485.A7KAL2"/>
<dbReference type="VEuPathDB" id="FungiDB:PCH_Pc18g03490"/>
<dbReference type="eggNOG" id="KOG0595">
    <property type="taxonomic scope" value="Eukaryota"/>
</dbReference>
<dbReference type="HOGENOM" id="CLU_006447_0_0_1"/>
<dbReference type="OMA" id="INNVVQW"/>
<dbReference type="OrthoDB" id="346907at2759"/>
<dbReference type="BioCyc" id="PCHR:PC18G03490-MONOMER"/>
<dbReference type="Proteomes" id="UP000000724">
    <property type="component" value="Contig Pc00c18"/>
</dbReference>
<dbReference type="GO" id="GO:0005776">
    <property type="term" value="C:autophagosome"/>
    <property type="evidence" value="ECO:0007669"/>
    <property type="project" value="TreeGrafter"/>
</dbReference>
<dbReference type="GO" id="GO:0005829">
    <property type="term" value="C:cytosol"/>
    <property type="evidence" value="ECO:0007669"/>
    <property type="project" value="TreeGrafter"/>
</dbReference>
<dbReference type="GO" id="GO:0034045">
    <property type="term" value="C:phagophore assembly site membrane"/>
    <property type="evidence" value="ECO:0007669"/>
    <property type="project" value="UniProtKB-SubCell"/>
</dbReference>
<dbReference type="GO" id="GO:0005524">
    <property type="term" value="F:ATP binding"/>
    <property type="evidence" value="ECO:0007669"/>
    <property type="project" value="UniProtKB-KW"/>
</dbReference>
<dbReference type="GO" id="GO:0106310">
    <property type="term" value="F:protein serine kinase activity"/>
    <property type="evidence" value="ECO:0007669"/>
    <property type="project" value="RHEA"/>
</dbReference>
<dbReference type="GO" id="GO:0004674">
    <property type="term" value="F:protein serine/threonine kinase activity"/>
    <property type="evidence" value="ECO:0007669"/>
    <property type="project" value="UniProtKB-KW"/>
</dbReference>
<dbReference type="GO" id="GO:0000045">
    <property type="term" value="P:autophagosome assembly"/>
    <property type="evidence" value="ECO:0007669"/>
    <property type="project" value="TreeGrafter"/>
</dbReference>
<dbReference type="GO" id="GO:0000422">
    <property type="term" value="P:autophagy of mitochondrion"/>
    <property type="evidence" value="ECO:0007669"/>
    <property type="project" value="TreeGrafter"/>
</dbReference>
<dbReference type="GO" id="GO:0034727">
    <property type="term" value="P:piecemeal microautophagy of the nucleus"/>
    <property type="evidence" value="ECO:0007669"/>
    <property type="project" value="TreeGrafter"/>
</dbReference>
<dbReference type="GO" id="GO:0015031">
    <property type="term" value="P:protein transport"/>
    <property type="evidence" value="ECO:0007669"/>
    <property type="project" value="UniProtKB-KW"/>
</dbReference>
<dbReference type="GO" id="GO:0010506">
    <property type="term" value="P:regulation of autophagy"/>
    <property type="evidence" value="ECO:0007669"/>
    <property type="project" value="InterPro"/>
</dbReference>
<dbReference type="GO" id="GO:0042594">
    <property type="term" value="P:response to starvation"/>
    <property type="evidence" value="ECO:0007669"/>
    <property type="project" value="TreeGrafter"/>
</dbReference>
<dbReference type="GO" id="GO:0061709">
    <property type="term" value="P:reticulophagy"/>
    <property type="evidence" value="ECO:0007669"/>
    <property type="project" value="TreeGrafter"/>
</dbReference>
<dbReference type="CDD" id="cd14009">
    <property type="entry name" value="STKc_ATG1_ULK_like"/>
    <property type="match status" value="1"/>
</dbReference>
<dbReference type="FunFam" id="1.10.510.10:FF:000817">
    <property type="entry name" value="Serine/threonine-protein kinase ATG1"/>
    <property type="match status" value="1"/>
</dbReference>
<dbReference type="FunFam" id="3.30.200.20:FF:000399">
    <property type="entry name" value="Serine/threonine-protein kinase atg1"/>
    <property type="match status" value="1"/>
</dbReference>
<dbReference type="Gene3D" id="3.30.200.20">
    <property type="entry name" value="Phosphorylase Kinase, domain 1"/>
    <property type="match status" value="1"/>
</dbReference>
<dbReference type="Gene3D" id="1.10.510.10">
    <property type="entry name" value="Transferase(Phosphotransferase) domain 1"/>
    <property type="match status" value="1"/>
</dbReference>
<dbReference type="InterPro" id="IPR045269">
    <property type="entry name" value="Atg1-like"/>
</dbReference>
<dbReference type="InterPro" id="IPR048941">
    <property type="entry name" value="ATG1-like_MIT2"/>
</dbReference>
<dbReference type="InterPro" id="IPR022708">
    <property type="entry name" value="Atg1-like_tMIT"/>
</dbReference>
<dbReference type="InterPro" id="IPR011009">
    <property type="entry name" value="Kinase-like_dom_sf"/>
</dbReference>
<dbReference type="InterPro" id="IPR000719">
    <property type="entry name" value="Prot_kinase_dom"/>
</dbReference>
<dbReference type="InterPro" id="IPR017441">
    <property type="entry name" value="Protein_kinase_ATP_BS"/>
</dbReference>
<dbReference type="InterPro" id="IPR008271">
    <property type="entry name" value="Ser/Thr_kinase_AS"/>
</dbReference>
<dbReference type="PANTHER" id="PTHR24348:SF22">
    <property type="entry name" value="NON-SPECIFIC SERINE_THREONINE PROTEIN KINASE"/>
    <property type="match status" value="1"/>
</dbReference>
<dbReference type="PANTHER" id="PTHR24348">
    <property type="entry name" value="SERINE/THREONINE-PROTEIN KINASE UNC-51-RELATED"/>
    <property type="match status" value="1"/>
</dbReference>
<dbReference type="Pfam" id="PF12063">
    <property type="entry name" value="ATG1-like_MIT1"/>
    <property type="match status" value="1"/>
</dbReference>
<dbReference type="Pfam" id="PF21127">
    <property type="entry name" value="ATG1-like_MIT2"/>
    <property type="match status" value="1"/>
</dbReference>
<dbReference type="Pfam" id="PF00069">
    <property type="entry name" value="Pkinase"/>
    <property type="match status" value="1"/>
</dbReference>
<dbReference type="SMART" id="SM00220">
    <property type="entry name" value="S_TKc"/>
    <property type="match status" value="1"/>
</dbReference>
<dbReference type="SUPFAM" id="SSF56112">
    <property type="entry name" value="Protein kinase-like (PK-like)"/>
    <property type="match status" value="1"/>
</dbReference>
<dbReference type="PROSITE" id="PS00107">
    <property type="entry name" value="PROTEIN_KINASE_ATP"/>
    <property type="match status" value="1"/>
</dbReference>
<dbReference type="PROSITE" id="PS50011">
    <property type="entry name" value="PROTEIN_KINASE_DOM"/>
    <property type="match status" value="1"/>
</dbReference>
<dbReference type="PROSITE" id="PS00108">
    <property type="entry name" value="PROTEIN_KINASE_ST"/>
    <property type="match status" value="1"/>
</dbReference>
<accession>A7KAL2</accession>
<accession>B6HBB5</accession>
<feature type="chain" id="PRO_0000317795" description="Serine/threonine-protein kinase atg1">
    <location>
        <begin position="1"/>
        <end position="960"/>
    </location>
</feature>
<feature type="domain" description="Protein kinase" evidence="2">
    <location>
        <begin position="22"/>
        <end position="327"/>
    </location>
</feature>
<feature type="region of interest" description="Disordered" evidence="4">
    <location>
        <begin position="333"/>
        <end position="467"/>
    </location>
</feature>
<feature type="region of interest" description="Disordered" evidence="4">
    <location>
        <begin position="503"/>
        <end position="538"/>
    </location>
</feature>
<feature type="region of interest" description="Disordered" evidence="4">
    <location>
        <begin position="550"/>
        <end position="571"/>
    </location>
</feature>
<feature type="region of interest" description="Disordered" evidence="4">
    <location>
        <begin position="673"/>
        <end position="694"/>
    </location>
</feature>
<feature type="region of interest" description="Disordered" evidence="4">
    <location>
        <begin position="789"/>
        <end position="815"/>
    </location>
</feature>
<feature type="region of interest" description="Disordered" evidence="4">
    <location>
        <begin position="926"/>
        <end position="960"/>
    </location>
</feature>
<feature type="compositionally biased region" description="Polar residues" evidence="4">
    <location>
        <begin position="376"/>
        <end position="388"/>
    </location>
</feature>
<feature type="compositionally biased region" description="Polar residues" evidence="4">
    <location>
        <begin position="520"/>
        <end position="536"/>
    </location>
</feature>
<feature type="compositionally biased region" description="Basic and acidic residues" evidence="4">
    <location>
        <begin position="550"/>
        <end position="566"/>
    </location>
</feature>
<feature type="compositionally biased region" description="Basic and acidic residues" evidence="4">
    <location>
        <begin position="789"/>
        <end position="800"/>
    </location>
</feature>
<feature type="compositionally biased region" description="Low complexity" evidence="4">
    <location>
        <begin position="801"/>
        <end position="815"/>
    </location>
</feature>
<feature type="compositionally biased region" description="Polar residues" evidence="4">
    <location>
        <begin position="930"/>
        <end position="951"/>
    </location>
</feature>
<feature type="active site" description="Proton acceptor" evidence="2 3">
    <location>
        <position position="165"/>
    </location>
</feature>
<feature type="binding site" evidence="2">
    <location>
        <begin position="28"/>
        <end position="36"/>
    </location>
    <ligand>
        <name>ATP</name>
        <dbReference type="ChEBI" id="CHEBI:30616"/>
    </ligand>
</feature>
<feature type="binding site" evidence="2">
    <location>
        <position position="51"/>
    </location>
    <ligand>
        <name>ATP</name>
        <dbReference type="ChEBI" id="CHEBI:30616"/>
    </ligand>
</feature>
<comment type="function">
    <text evidence="1 5">Serine/threonine protein kinase involved in the cytoplasm to vacuole transport (Cvt) and found to be essential in autophagy, where it is required for the formation of autophagosomes (PubMed:17204848). Involved in the clearance of protein aggregates which cannot be efficiently cleared by the proteasome. Required for selective autophagic degradation of the nucleus (nucleophagy) as well as for mitophagy which contributes to regulate mitochondrial quantity and quality by eliminating the mitochondria to a basal level to fulfill cellular energy requirements and preventing excess ROS production. Also involved in endoplasmic reticulum-specific autophagic process, in selective removal of ER-associated degradation (ERAD) substrates. Plays a key role in ATG9 and ATG23 cycling through the pre-autophagosomal structure and is necessary to promote ATG18 binding to ATG9 through phosphorylation of ATG9. Catalyzes phosphorylation of ATG4, decreasing the interaction between ATG4 and ATG8 and impairing deconjugation of PE-conjugated forms of ATG8 (By similarity).</text>
</comment>
<comment type="catalytic activity">
    <reaction evidence="1">
        <text>L-seryl-[protein] + ATP = O-phospho-L-seryl-[protein] + ADP + H(+)</text>
        <dbReference type="Rhea" id="RHEA:17989"/>
        <dbReference type="Rhea" id="RHEA-COMP:9863"/>
        <dbReference type="Rhea" id="RHEA-COMP:11604"/>
        <dbReference type="ChEBI" id="CHEBI:15378"/>
        <dbReference type="ChEBI" id="CHEBI:29999"/>
        <dbReference type="ChEBI" id="CHEBI:30616"/>
        <dbReference type="ChEBI" id="CHEBI:83421"/>
        <dbReference type="ChEBI" id="CHEBI:456216"/>
        <dbReference type="EC" id="2.7.11.1"/>
    </reaction>
</comment>
<comment type="catalytic activity">
    <reaction evidence="1">
        <text>L-threonyl-[protein] + ATP = O-phospho-L-threonyl-[protein] + ADP + H(+)</text>
        <dbReference type="Rhea" id="RHEA:46608"/>
        <dbReference type="Rhea" id="RHEA-COMP:11060"/>
        <dbReference type="Rhea" id="RHEA-COMP:11605"/>
        <dbReference type="ChEBI" id="CHEBI:15378"/>
        <dbReference type="ChEBI" id="CHEBI:30013"/>
        <dbReference type="ChEBI" id="CHEBI:30616"/>
        <dbReference type="ChEBI" id="CHEBI:61977"/>
        <dbReference type="ChEBI" id="CHEBI:456216"/>
        <dbReference type="EC" id="2.7.11.1"/>
    </reaction>
</comment>
<comment type="subunit">
    <text evidence="1">Homodimer. Forms a ternary complex with ATG13 and ATG17.</text>
</comment>
<comment type="subcellular location">
    <subcellularLocation>
        <location evidence="1">Cytoplasm</location>
    </subcellularLocation>
    <subcellularLocation>
        <location evidence="1">Preautophagosomal structure membrane</location>
        <topology evidence="1">Peripheral membrane protein</topology>
    </subcellularLocation>
</comment>
<comment type="similarity">
    <text evidence="2">Belongs to the protein kinase superfamily. Ser/Thr protein kinase family. APG1/unc-51/ULK1 subfamily.</text>
</comment>
<organism>
    <name type="scientific">Penicillium rubens (strain ATCC 28089 / DSM 1075 / NRRL 1951 / Wisconsin 54-1255)</name>
    <name type="common">Penicillium chrysogenum</name>
    <dbReference type="NCBI Taxonomy" id="500485"/>
    <lineage>
        <taxon>Eukaryota</taxon>
        <taxon>Fungi</taxon>
        <taxon>Dikarya</taxon>
        <taxon>Ascomycota</taxon>
        <taxon>Pezizomycotina</taxon>
        <taxon>Eurotiomycetes</taxon>
        <taxon>Eurotiomycetidae</taxon>
        <taxon>Eurotiales</taxon>
        <taxon>Aspergillaceae</taxon>
        <taxon>Penicillium</taxon>
        <taxon>Penicillium chrysogenum species complex</taxon>
    </lineage>
</organism>
<gene>
    <name evidence="6" type="primary">atg1</name>
    <name evidence="7" type="ORF">Pc18g03490</name>
</gene>
<name>ATG1_PENRW</name>
<protein>
    <recommendedName>
        <fullName evidence="1">Serine/threonine-protein kinase atg1</fullName>
        <ecNumber evidence="1">2.7.11.1</ecNumber>
    </recommendedName>
    <alternativeName>
        <fullName evidence="1">Autophagy-related protein 1</fullName>
    </alternativeName>
</protein>
<evidence type="ECO:0000250" key="1">
    <source>
        <dbReference type="UniProtKB" id="P53104"/>
    </source>
</evidence>
<evidence type="ECO:0000255" key="2">
    <source>
        <dbReference type="PROSITE-ProRule" id="PRU00159"/>
    </source>
</evidence>
<evidence type="ECO:0000255" key="3">
    <source>
        <dbReference type="PROSITE-ProRule" id="PRU10027"/>
    </source>
</evidence>
<evidence type="ECO:0000256" key="4">
    <source>
        <dbReference type="SAM" id="MobiDB-lite"/>
    </source>
</evidence>
<evidence type="ECO:0000269" key="5">
    <source>
    </source>
</evidence>
<evidence type="ECO:0000303" key="6">
    <source>
    </source>
</evidence>
<evidence type="ECO:0000303" key="7">
    <source>
    </source>
</evidence>
<sequence>MASQHSRRSREAPRPEMSIGRYTRLDEIGRGSFATVYQGVHTKSKTYVAIKSVNLSKLNKKLKENLSSEIDILKGLHHPHIVALIDCHESTSHIHLVMEYCALGDLSLFIKRRDTLGSHKYTRDMIAKYPNPPGGSLNEVVTRHFLKQLSSALKFLRDRNLIHRDIKPQNLLLCPSPSSYRSGHAQVMPYKGSDDSYEPTTGLESLPMLKIADFGFARSLPATSLAETLCGSPLYMAPEILRYEKYDAKADLWSVGTVLYEMVVGRPPFRATNHVELLRKIEKGEDRIRFPEDNPASDDIKKLIRGLLKRNPVERLNFPEFFSNNVINDPIPGLLADDAPGPPQSPRPRQLVGKAEESPYDTGPEDKLAYPPGQRPVTTHPKSGTPPTATDMRRMGSADRPAPAISKEQQPGGTPPQRPGPVSLATAPGRQELIDRNATTAAMDRQRHRNTYAGAPKASDSTIRAQEARDRAAQEVAFERDYVVVEKRAVEVNAFADELAHSPRLQGGLSRPGQTGAGSRRTTTQGLPTVSPSSPHANAAKAMQVVSGRARADSTHQRQHSYERRYGQSPTSATSAISKALNMASGRLFGMGFSPPLAITKGGRSPPLAYNPFPAYPPVHASLLITGDGSKPNATGDEDCKAVQEIEECATRSDVVFGFAEVKYKQLIPLAPSASTDPSARPMDTNVEPDSADSDDGLTVDAIVTLSEEALVLYVKALSLLAKSMDIAGAWWSRKNREEVYGESPTKDSMSAVAGTRINYVVQWVRSRFNEVIEKAEFVRLKLIEGQRRLPPDHPSHPDNHSISSTAGSSSTADVVVSPGVTAERLMYDRALEMSRAAAINELTGEDLANCEITYVTAIRMLEAVLEDDGMRSMPGSNIERQSSSQGGEKVVLDELQVEDRQVVVKLVSSMRGRLASVRKKVAVLAKRSSAPTPTAGSAGKTPTSNISPVTYATGVTPPR</sequence>
<reference key="1">
    <citation type="journal article" date="2007" name="Autophagy">
        <title>ATG genes involved in non-selective autophagy are conserved from yeast to man, but the selective Cvt and pexophagy pathways also require organism-specific genes.</title>
        <authorList>
            <person name="Meijer W.H."/>
            <person name="van der Klei I.J."/>
            <person name="Veenhuis M."/>
            <person name="Kiel J.A.K.W."/>
        </authorList>
    </citation>
    <scope>NUCLEOTIDE SEQUENCE [GENOMIC DNA]</scope>
    <scope>FUNCTION</scope>
</reference>
<reference key="2">
    <citation type="journal article" date="2008" name="Nat. Biotechnol.">
        <title>Genome sequencing and analysis of the filamentous fungus Penicillium chrysogenum.</title>
        <authorList>
            <person name="van den Berg M.A."/>
            <person name="Albang R."/>
            <person name="Albermann K."/>
            <person name="Badger J.H."/>
            <person name="Daran J.-M."/>
            <person name="Driessen A.J.M."/>
            <person name="Garcia-Estrada C."/>
            <person name="Fedorova N.D."/>
            <person name="Harris D.M."/>
            <person name="Heijne W.H.M."/>
            <person name="Joardar V.S."/>
            <person name="Kiel J.A.K.W."/>
            <person name="Kovalchuk A."/>
            <person name="Martin J.F."/>
            <person name="Nierman W.C."/>
            <person name="Nijland J.G."/>
            <person name="Pronk J.T."/>
            <person name="Roubos J.A."/>
            <person name="van der Klei I.J."/>
            <person name="van Peij N.N.M.E."/>
            <person name="Veenhuis M."/>
            <person name="von Doehren H."/>
            <person name="Wagner C."/>
            <person name="Wortman J.R."/>
            <person name="Bovenberg R.A.L."/>
        </authorList>
    </citation>
    <scope>NUCLEOTIDE SEQUENCE [LARGE SCALE GENOMIC DNA]</scope>
    <source>
        <strain>ATCC 28089 / DSM 1075 / NRRL 1951 / Wisconsin 54-1255</strain>
    </source>
</reference>
<keyword id="KW-0067">ATP-binding</keyword>
<keyword id="KW-0072">Autophagy</keyword>
<keyword id="KW-0963">Cytoplasm</keyword>
<keyword id="KW-0418">Kinase</keyword>
<keyword id="KW-0472">Membrane</keyword>
<keyword id="KW-0547">Nucleotide-binding</keyword>
<keyword id="KW-0653">Protein transport</keyword>
<keyword id="KW-1185">Reference proteome</keyword>
<keyword id="KW-0723">Serine/threonine-protein kinase</keyword>
<keyword id="KW-0808">Transferase</keyword>
<keyword id="KW-0813">Transport</keyword>